<organism>
    <name type="scientific">Legionella pneumophila (strain Paris)</name>
    <dbReference type="NCBI Taxonomy" id="297246"/>
    <lineage>
        <taxon>Bacteria</taxon>
        <taxon>Pseudomonadati</taxon>
        <taxon>Pseudomonadota</taxon>
        <taxon>Gammaproteobacteria</taxon>
        <taxon>Legionellales</taxon>
        <taxon>Legionellaceae</taxon>
        <taxon>Legionella</taxon>
    </lineage>
</organism>
<proteinExistence type="inferred from homology"/>
<dbReference type="EMBL" id="CR628336">
    <property type="protein sequence ID" value="CAH13851.1"/>
    <property type="molecule type" value="Genomic_DNA"/>
</dbReference>
<dbReference type="RefSeq" id="WP_015961726.1">
    <property type="nucleotide sequence ID" value="NC_006368.1"/>
</dbReference>
<dbReference type="SMR" id="Q5X1P5"/>
<dbReference type="KEGG" id="lpp:lpp2698"/>
<dbReference type="LegioList" id="lpp2698"/>
<dbReference type="HOGENOM" id="CLU_014841_3_0_6"/>
<dbReference type="GO" id="GO:0005737">
    <property type="term" value="C:cytoplasm"/>
    <property type="evidence" value="ECO:0007669"/>
    <property type="project" value="UniProtKB-SubCell"/>
</dbReference>
<dbReference type="GO" id="GO:0009380">
    <property type="term" value="C:excinuclease repair complex"/>
    <property type="evidence" value="ECO:0007669"/>
    <property type="project" value="InterPro"/>
</dbReference>
<dbReference type="GO" id="GO:0003677">
    <property type="term" value="F:DNA binding"/>
    <property type="evidence" value="ECO:0007669"/>
    <property type="project" value="UniProtKB-UniRule"/>
</dbReference>
<dbReference type="GO" id="GO:0009381">
    <property type="term" value="F:excinuclease ABC activity"/>
    <property type="evidence" value="ECO:0007669"/>
    <property type="project" value="UniProtKB-UniRule"/>
</dbReference>
<dbReference type="GO" id="GO:0006289">
    <property type="term" value="P:nucleotide-excision repair"/>
    <property type="evidence" value="ECO:0007669"/>
    <property type="project" value="UniProtKB-UniRule"/>
</dbReference>
<dbReference type="GO" id="GO:0009432">
    <property type="term" value="P:SOS response"/>
    <property type="evidence" value="ECO:0007669"/>
    <property type="project" value="UniProtKB-UniRule"/>
</dbReference>
<dbReference type="CDD" id="cd10434">
    <property type="entry name" value="GIY-YIG_UvrC_Cho"/>
    <property type="match status" value="1"/>
</dbReference>
<dbReference type="FunFam" id="1.10.150.20:FF:000005">
    <property type="entry name" value="UvrABC system protein C"/>
    <property type="match status" value="1"/>
</dbReference>
<dbReference type="FunFam" id="3.30.420.340:FF:000001">
    <property type="entry name" value="UvrABC system protein C"/>
    <property type="match status" value="1"/>
</dbReference>
<dbReference type="FunFam" id="3.40.1440.10:FF:000001">
    <property type="entry name" value="UvrABC system protein C"/>
    <property type="match status" value="1"/>
</dbReference>
<dbReference type="Gene3D" id="1.10.150.20">
    <property type="entry name" value="5' to 3' exonuclease, C-terminal subdomain"/>
    <property type="match status" value="1"/>
</dbReference>
<dbReference type="Gene3D" id="3.40.1440.10">
    <property type="entry name" value="GIY-YIG endonuclease"/>
    <property type="match status" value="1"/>
</dbReference>
<dbReference type="Gene3D" id="4.10.860.10">
    <property type="entry name" value="UVR domain"/>
    <property type="match status" value="1"/>
</dbReference>
<dbReference type="Gene3D" id="3.30.420.340">
    <property type="entry name" value="UvrC, RNAse H endonuclease domain"/>
    <property type="match status" value="1"/>
</dbReference>
<dbReference type="HAMAP" id="MF_00203">
    <property type="entry name" value="UvrC"/>
    <property type="match status" value="1"/>
</dbReference>
<dbReference type="InterPro" id="IPR000305">
    <property type="entry name" value="GIY-YIG_endonuc"/>
</dbReference>
<dbReference type="InterPro" id="IPR035901">
    <property type="entry name" value="GIY-YIG_endonuc_sf"/>
</dbReference>
<dbReference type="InterPro" id="IPR047296">
    <property type="entry name" value="GIY-YIG_UvrC_Cho"/>
</dbReference>
<dbReference type="InterPro" id="IPR003583">
    <property type="entry name" value="Hlx-hairpin-Hlx_DNA-bd_motif"/>
</dbReference>
<dbReference type="InterPro" id="IPR010994">
    <property type="entry name" value="RuvA_2-like"/>
</dbReference>
<dbReference type="InterPro" id="IPR001943">
    <property type="entry name" value="UVR_dom"/>
</dbReference>
<dbReference type="InterPro" id="IPR036876">
    <property type="entry name" value="UVR_dom_sf"/>
</dbReference>
<dbReference type="InterPro" id="IPR050066">
    <property type="entry name" value="UvrABC_protein_C"/>
</dbReference>
<dbReference type="InterPro" id="IPR004791">
    <property type="entry name" value="UvrC"/>
</dbReference>
<dbReference type="InterPro" id="IPR001162">
    <property type="entry name" value="UvrC_RNase_H_dom"/>
</dbReference>
<dbReference type="InterPro" id="IPR038476">
    <property type="entry name" value="UvrC_RNase_H_dom_sf"/>
</dbReference>
<dbReference type="NCBIfam" id="NF001824">
    <property type="entry name" value="PRK00558.1-5"/>
    <property type="match status" value="1"/>
</dbReference>
<dbReference type="NCBIfam" id="TIGR00194">
    <property type="entry name" value="uvrC"/>
    <property type="match status" value="1"/>
</dbReference>
<dbReference type="PANTHER" id="PTHR30562:SF1">
    <property type="entry name" value="UVRABC SYSTEM PROTEIN C"/>
    <property type="match status" value="1"/>
</dbReference>
<dbReference type="PANTHER" id="PTHR30562">
    <property type="entry name" value="UVRC/OXIDOREDUCTASE"/>
    <property type="match status" value="1"/>
</dbReference>
<dbReference type="Pfam" id="PF01541">
    <property type="entry name" value="GIY-YIG"/>
    <property type="match status" value="1"/>
</dbReference>
<dbReference type="Pfam" id="PF14520">
    <property type="entry name" value="HHH_5"/>
    <property type="match status" value="1"/>
</dbReference>
<dbReference type="Pfam" id="PF02151">
    <property type="entry name" value="UVR"/>
    <property type="match status" value="1"/>
</dbReference>
<dbReference type="Pfam" id="PF22920">
    <property type="entry name" value="UvrC_RNaseH"/>
    <property type="match status" value="1"/>
</dbReference>
<dbReference type="Pfam" id="PF08459">
    <property type="entry name" value="UvrC_RNaseH_dom"/>
    <property type="match status" value="1"/>
</dbReference>
<dbReference type="SMART" id="SM00465">
    <property type="entry name" value="GIYc"/>
    <property type="match status" value="1"/>
</dbReference>
<dbReference type="SMART" id="SM00278">
    <property type="entry name" value="HhH1"/>
    <property type="match status" value="2"/>
</dbReference>
<dbReference type="SUPFAM" id="SSF46600">
    <property type="entry name" value="C-terminal UvrC-binding domain of UvrB"/>
    <property type="match status" value="1"/>
</dbReference>
<dbReference type="SUPFAM" id="SSF82771">
    <property type="entry name" value="GIY-YIG endonuclease"/>
    <property type="match status" value="1"/>
</dbReference>
<dbReference type="SUPFAM" id="SSF47781">
    <property type="entry name" value="RuvA domain 2-like"/>
    <property type="match status" value="1"/>
</dbReference>
<dbReference type="PROSITE" id="PS50164">
    <property type="entry name" value="GIY_YIG"/>
    <property type="match status" value="1"/>
</dbReference>
<dbReference type="PROSITE" id="PS50151">
    <property type="entry name" value="UVR"/>
    <property type="match status" value="1"/>
</dbReference>
<dbReference type="PROSITE" id="PS50165">
    <property type="entry name" value="UVRC"/>
    <property type="match status" value="1"/>
</dbReference>
<evidence type="ECO:0000255" key="1">
    <source>
        <dbReference type="HAMAP-Rule" id="MF_00203"/>
    </source>
</evidence>
<accession>Q5X1P5</accession>
<sequence>MNDLQLSAELALFLTKLPSEPGIYRMLDEEGTVLYVGKAANLKKRVNSYFSKQNTGVKTRALVSQIKSIEISVTRSETEALLLESNLIKALRPKYNVLLRDDKSYPYIHLSNHPDFPRIELYRSKKKPPSGNFFGPYPGVAAVRETIVTIQKIFKIRNCRDSYFKARSRPCLQYQIKRCTAPCVHYISPENYKLSVEDAIRFLQGKCQIILDALAERMKQAVNQLNFEEAAVLRDQIKNLRLIQEQQGVVQLRGDADVIAIEVRPGFACIQCVTIREGQVLNSQSFFPTVPYAVLDEELDANSLWQQTFEAFIGFYYLDTTERIPDLIITNQSITESRSLEYILSQRRGKSCKIQVNPRGVKSRWMDFAVNNLRISVAEYVSKHSTIRSRYQALKQLLALDKNIERMECFDISHTQGEATVASCVVFDTEGPRPSEYRRFNIEGITPGDDYAAMEQAVTRRFKRLIDAQLLPDVLIIDGGKGQVSIVKRVLTSLGVEDITLLGVSKGPSRKAGWEKLILVNENREFVLPEDSKALHLLQHIRDEAHRFAITAHRKKRQKTRVESTLESIEGVGAKRRQALLQRFGGLRELAKAPLEEICKVQGISEQLAKRIHEHFHP</sequence>
<comment type="function">
    <text evidence="1">The UvrABC repair system catalyzes the recognition and processing of DNA lesions. UvrC both incises the 5' and 3' sides of the lesion. The N-terminal half is responsible for the 3' incision and the C-terminal half is responsible for the 5' incision.</text>
</comment>
<comment type="subunit">
    <text evidence="1">Interacts with UvrB in an incision complex.</text>
</comment>
<comment type="subcellular location">
    <subcellularLocation>
        <location evidence="1">Cytoplasm</location>
    </subcellularLocation>
</comment>
<comment type="similarity">
    <text evidence="1">Belongs to the UvrC family.</text>
</comment>
<keyword id="KW-0963">Cytoplasm</keyword>
<keyword id="KW-0227">DNA damage</keyword>
<keyword id="KW-0228">DNA excision</keyword>
<keyword id="KW-0234">DNA repair</keyword>
<keyword id="KW-0267">Excision nuclease</keyword>
<keyword id="KW-0742">SOS response</keyword>
<feature type="chain" id="PRO_0000227442" description="UvrABC system protein C">
    <location>
        <begin position="1"/>
        <end position="618"/>
    </location>
</feature>
<feature type="domain" description="GIY-YIG" evidence="1">
    <location>
        <begin position="19"/>
        <end position="97"/>
    </location>
</feature>
<feature type="domain" description="UVR" evidence="1">
    <location>
        <begin position="208"/>
        <end position="243"/>
    </location>
</feature>
<reference key="1">
    <citation type="journal article" date="2004" name="Nat. Genet.">
        <title>Evidence in the Legionella pneumophila genome for exploitation of host cell functions and high genome plasticity.</title>
        <authorList>
            <person name="Cazalet C."/>
            <person name="Rusniok C."/>
            <person name="Brueggemann H."/>
            <person name="Zidane N."/>
            <person name="Magnier A."/>
            <person name="Ma L."/>
            <person name="Tichit M."/>
            <person name="Jarraud S."/>
            <person name="Bouchier C."/>
            <person name="Vandenesch F."/>
            <person name="Kunst F."/>
            <person name="Etienne J."/>
            <person name="Glaser P."/>
            <person name="Buchrieser C."/>
        </authorList>
    </citation>
    <scope>NUCLEOTIDE SEQUENCE [LARGE SCALE GENOMIC DNA]</scope>
    <source>
        <strain>Paris</strain>
    </source>
</reference>
<gene>
    <name evidence="1" type="primary">uvrC</name>
    <name type="ordered locus">lpp2698</name>
</gene>
<name>UVRC_LEGPA</name>
<protein>
    <recommendedName>
        <fullName evidence="1">UvrABC system protein C</fullName>
        <shortName evidence="1">Protein UvrC</shortName>
    </recommendedName>
    <alternativeName>
        <fullName evidence="1">Excinuclease ABC subunit C</fullName>
    </alternativeName>
</protein>